<feature type="chain" id="PRO_0000298062" description="Cell division topological specificity factor">
    <location>
        <begin position="1"/>
        <end position="88"/>
    </location>
</feature>
<protein>
    <recommendedName>
        <fullName evidence="1">Cell division topological specificity factor</fullName>
    </recommendedName>
</protein>
<comment type="function">
    <text evidence="1">Prevents the cell division inhibition by proteins MinC and MinD at internal division sites while permitting inhibition at polar sites. This ensures cell division at the proper site by restricting the formation of a division septum at the midpoint of the long axis of the cell.</text>
</comment>
<comment type="similarity">
    <text evidence="1">Belongs to the MinE family.</text>
</comment>
<name>MINE_ACISJ</name>
<sequence length="88" mass="9901">MSLLSFLLGEKKKTASVAKERLQIILAHERSGRSAGQPDYLPALQRELVAVISKYVKINADDLKVHFERQDDLEVLEVKIELPEATAK</sequence>
<organism>
    <name type="scientific">Acidovorax sp. (strain JS42)</name>
    <dbReference type="NCBI Taxonomy" id="232721"/>
    <lineage>
        <taxon>Bacteria</taxon>
        <taxon>Pseudomonadati</taxon>
        <taxon>Pseudomonadota</taxon>
        <taxon>Betaproteobacteria</taxon>
        <taxon>Burkholderiales</taxon>
        <taxon>Comamonadaceae</taxon>
        <taxon>Acidovorax</taxon>
    </lineage>
</organism>
<dbReference type="EMBL" id="CP000539">
    <property type="protein sequence ID" value="ABM40322.1"/>
    <property type="molecule type" value="Genomic_DNA"/>
</dbReference>
<dbReference type="SMR" id="A1W247"/>
<dbReference type="STRING" id="232721.Ajs_0067"/>
<dbReference type="KEGG" id="ajs:Ajs_0067"/>
<dbReference type="eggNOG" id="COG0851">
    <property type="taxonomic scope" value="Bacteria"/>
</dbReference>
<dbReference type="HOGENOM" id="CLU_137929_2_1_4"/>
<dbReference type="Proteomes" id="UP000000645">
    <property type="component" value="Chromosome"/>
</dbReference>
<dbReference type="GO" id="GO:0051301">
    <property type="term" value="P:cell division"/>
    <property type="evidence" value="ECO:0007669"/>
    <property type="project" value="UniProtKB-KW"/>
</dbReference>
<dbReference type="GO" id="GO:0032955">
    <property type="term" value="P:regulation of division septum assembly"/>
    <property type="evidence" value="ECO:0007669"/>
    <property type="project" value="InterPro"/>
</dbReference>
<dbReference type="FunFam" id="3.30.1070.10:FF:000001">
    <property type="entry name" value="Cell division topological specificity factor"/>
    <property type="match status" value="1"/>
</dbReference>
<dbReference type="Gene3D" id="3.30.1070.10">
    <property type="entry name" value="Cell division topological specificity factor MinE"/>
    <property type="match status" value="1"/>
</dbReference>
<dbReference type="HAMAP" id="MF_00262">
    <property type="entry name" value="MinE"/>
    <property type="match status" value="1"/>
</dbReference>
<dbReference type="InterPro" id="IPR005527">
    <property type="entry name" value="MinE"/>
</dbReference>
<dbReference type="InterPro" id="IPR036707">
    <property type="entry name" value="MinE_sf"/>
</dbReference>
<dbReference type="NCBIfam" id="TIGR01215">
    <property type="entry name" value="minE"/>
    <property type="match status" value="1"/>
</dbReference>
<dbReference type="NCBIfam" id="NF001422">
    <property type="entry name" value="PRK00296.1"/>
    <property type="match status" value="1"/>
</dbReference>
<dbReference type="NCBIfam" id="NF010595">
    <property type="entry name" value="PRK13989.1"/>
    <property type="match status" value="1"/>
</dbReference>
<dbReference type="Pfam" id="PF03776">
    <property type="entry name" value="MinE"/>
    <property type="match status" value="1"/>
</dbReference>
<dbReference type="SUPFAM" id="SSF55229">
    <property type="entry name" value="Cell division protein MinE topological specificity domain"/>
    <property type="match status" value="1"/>
</dbReference>
<reference key="1">
    <citation type="submission" date="2006-12" db="EMBL/GenBank/DDBJ databases">
        <title>Complete sequence of chromosome 1 of Acidovorax sp. JS42.</title>
        <authorList>
            <person name="Copeland A."/>
            <person name="Lucas S."/>
            <person name="Lapidus A."/>
            <person name="Barry K."/>
            <person name="Detter J.C."/>
            <person name="Glavina del Rio T."/>
            <person name="Dalin E."/>
            <person name="Tice H."/>
            <person name="Pitluck S."/>
            <person name="Chertkov O."/>
            <person name="Brettin T."/>
            <person name="Bruce D."/>
            <person name="Han C."/>
            <person name="Tapia R."/>
            <person name="Gilna P."/>
            <person name="Schmutz J."/>
            <person name="Larimer F."/>
            <person name="Land M."/>
            <person name="Hauser L."/>
            <person name="Kyrpides N."/>
            <person name="Kim E."/>
            <person name="Stahl D."/>
            <person name="Richardson P."/>
        </authorList>
    </citation>
    <scope>NUCLEOTIDE SEQUENCE [LARGE SCALE GENOMIC DNA]</scope>
    <source>
        <strain>JS42</strain>
    </source>
</reference>
<gene>
    <name evidence="1" type="primary">minE</name>
    <name type="ordered locus">Ajs_0067</name>
</gene>
<keyword id="KW-0131">Cell cycle</keyword>
<keyword id="KW-0132">Cell division</keyword>
<proteinExistence type="inferred from homology"/>
<accession>A1W247</accession>
<evidence type="ECO:0000255" key="1">
    <source>
        <dbReference type="HAMAP-Rule" id="MF_00262"/>
    </source>
</evidence>